<evidence type="ECO:0000250" key="1">
    <source>
        <dbReference type="UniProtKB" id="Q9ULR0"/>
    </source>
</evidence>
<evidence type="ECO:0000256" key="2">
    <source>
        <dbReference type="SAM" id="MobiDB-lite"/>
    </source>
</evidence>
<evidence type="ECO:0000269" key="3">
    <source>
    </source>
</evidence>
<evidence type="ECO:0000269" key="4">
    <source>
    </source>
</evidence>
<evidence type="ECO:0000305" key="5"/>
<evidence type="ECO:0007829" key="6">
    <source>
        <dbReference type="PDB" id="1X4T"/>
    </source>
</evidence>
<accession>Q69ZQ2</accession>
<accession>Q8VDX4</accession>
<accession>Q9D3E2</accession>
<gene>
    <name type="primary">Isy1</name>
    <name type="synonym">Kiaa1160</name>
</gene>
<reference key="1">
    <citation type="journal article" date="2004" name="DNA Res.">
        <title>Prediction of the coding sequences of mouse homologues of KIAA gene: IV. The complete nucleotide sequences of 500 mouse KIAA-homologous cDNAs identified by screening of terminal sequences of cDNA clones randomly sampled from size-fractionated libraries.</title>
        <authorList>
            <person name="Okazaki N."/>
            <person name="Kikuno R."/>
            <person name="Ohara R."/>
            <person name="Inamoto S."/>
            <person name="Koseki H."/>
            <person name="Hiraoka S."/>
            <person name="Saga Y."/>
            <person name="Seino S."/>
            <person name="Nishimura M."/>
            <person name="Kaisho T."/>
            <person name="Hoshino K."/>
            <person name="Kitamura H."/>
            <person name="Nagase T."/>
            <person name="Ohara O."/>
            <person name="Koga H."/>
        </authorList>
    </citation>
    <scope>NUCLEOTIDE SEQUENCE [LARGE SCALE MRNA]</scope>
    <source>
        <tissue>Brain</tissue>
    </source>
</reference>
<reference key="2">
    <citation type="journal article" date="2005" name="Science">
        <title>The transcriptional landscape of the mammalian genome.</title>
        <authorList>
            <person name="Carninci P."/>
            <person name="Kasukawa T."/>
            <person name="Katayama S."/>
            <person name="Gough J."/>
            <person name="Frith M.C."/>
            <person name="Maeda N."/>
            <person name="Oyama R."/>
            <person name="Ravasi T."/>
            <person name="Lenhard B."/>
            <person name="Wells C."/>
            <person name="Kodzius R."/>
            <person name="Shimokawa K."/>
            <person name="Bajic V.B."/>
            <person name="Brenner S.E."/>
            <person name="Batalov S."/>
            <person name="Forrest A.R."/>
            <person name="Zavolan M."/>
            <person name="Davis M.J."/>
            <person name="Wilming L.G."/>
            <person name="Aidinis V."/>
            <person name="Allen J.E."/>
            <person name="Ambesi-Impiombato A."/>
            <person name="Apweiler R."/>
            <person name="Aturaliya R.N."/>
            <person name="Bailey T.L."/>
            <person name="Bansal M."/>
            <person name="Baxter L."/>
            <person name="Beisel K.W."/>
            <person name="Bersano T."/>
            <person name="Bono H."/>
            <person name="Chalk A.M."/>
            <person name="Chiu K.P."/>
            <person name="Choudhary V."/>
            <person name="Christoffels A."/>
            <person name="Clutterbuck D.R."/>
            <person name="Crowe M.L."/>
            <person name="Dalla E."/>
            <person name="Dalrymple B.P."/>
            <person name="de Bono B."/>
            <person name="Della Gatta G."/>
            <person name="di Bernardo D."/>
            <person name="Down T."/>
            <person name="Engstrom P."/>
            <person name="Fagiolini M."/>
            <person name="Faulkner G."/>
            <person name="Fletcher C.F."/>
            <person name="Fukushima T."/>
            <person name="Furuno M."/>
            <person name="Futaki S."/>
            <person name="Gariboldi M."/>
            <person name="Georgii-Hemming P."/>
            <person name="Gingeras T.R."/>
            <person name="Gojobori T."/>
            <person name="Green R.E."/>
            <person name="Gustincich S."/>
            <person name="Harbers M."/>
            <person name="Hayashi Y."/>
            <person name="Hensch T.K."/>
            <person name="Hirokawa N."/>
            <person name="Hill D."/>
            <person name="Huminiecki L."/>
            <person name="Iacono M."/>
            <person name="Ikeo K."/>
            <person name="Iwama A."/>
            <person name="Ishikawa T."/>
            <person name="Jakt M."/>
            <person name="Kanapin A."/>
            <person name="Katoh M."/>
            <person name="Kawasawa Y."/>
            <person name="Kelso J."/>
            <person name="Kitamura H."/>
            <person name="Kitano H."/>
            <person name="Kollias G."/>
            <person name="Krishnan S.P."/>
            <person name="Kruger A."/>
            <person name="Kummerfeld S.K."/>
            <person name="Kurochkin I.V."/>
            <person name="Lareau L.F."/>
            <person name="Lazarevic D."/>
            <person name="Lipovich L."/>
            <person name="Liu J."/>
            <person name="Liuni S."/>
            <person name="McWilliam S."/>
            <person name="Madan Babu M."/>
            <person name="Madera M."/>
            <person name="Marchionni L."/>
            <person name="Matsuda H."/>
            <person name="Matsuzawa S."/>
            <person name="Miki H."/>
            <person name="Mignone F."/>
            <person name="Miyake S."/>
            <person name="Morris K."/>
            <person name="Mottagui-Tabar S."/>
            <person name="Mulder N."/>
            <person name="Nakano N."/>
            <person name="Nakauchi H."/>
            <person name="Ng P."/>
            <person name="Nilsson R."/>
            <person name="Nishiguchi S."/>
            <person name="Nishikawa S."/>
            <person name="Nori F."/>
            <person name="Ohara O."/>
            <person name="Okazaki Y."/>
            <person name="Orlando V."/>
            <person name="Pang K.C."/>
            <person name="Pavan W.J."/>
            <person name="Pavesi G."/>
            <person name="Pesole G."/>
            <person name="Petrovsky N."/>
            <person name="Piazza S."/>
            <person name="Reed J."/>
            <person name="Reid J.F."/>
            <person name="Ring B.Z."/>
            <person name="Ringwald M."/>
            <person name="Rost B."/>
            <person name="Ruan Y."/>
            <person name="Salzberg S.L."/>
            <person name="Sandelin A."/>
            <person name="Schneider C."/>
            <person name="Schoenbach C."/>
            <person name="Sekiguchi K."/>
            <person name="Semple C.A."/>
            <person name="Seno S."/>
            <person name="Sessa L."/>
            <person name="Sheng Y."/>
            <person name="Shibata Y."/>
            <person name="Shimada H."/>
            <person name="Shimada K."/>
            <person name="Silva D."/>
            <person name="Sinclair B."/>
            <person name="Sperling S."/>
            <person name="Stupka E."/>
            <person name="Sugiura K."/>
            <person name="Sultana R."/>
            <person name="Takenaka Y."/>
            <person name="Taki K."/>
            <person name="Tammoja K."/>
            <person name="Tan S.L."/>
            <person name="Tang S."/>
            <person name="Taylor M.S."/>
            <person name="Tegner J."/>
            <person name="Teichmann S.A."/>
            <person name="Ueda H.R."/>
            <person name="van Nimwegen E."/>
            <person name="Verardo R."/>
            <person name="Wei C.L."/>
            <person name="Yagi K."/>
            <person name="Yamanishi H."/>
            <person name="Zabarovsky E."/>
            <person name="Zhu S."/>
            <person name="Zimmer A."/>
            <person name="Hide W."/>
            <person name="Bult C."/>
            <person name="Grimmond S.M."/>
            <person name="Teasdale R.D."/>
            <person name="Liu E.T."/>
            <person name="Brusic V."/>
            <person name="Quackenbush J."/>
            <person name="Wahlestedt C."/>
            <person name="Mattick J.S."/>
            <person name="Hume D.A."/>
            <person name="Kai C."/>
            <person name="Sasaki D."/>
            <person name="Tomaru Y."/>
            <person name="Fukuda S."/>
            <person name="Kanamori-Katayama M."/>
            <person name="Suzuki M."/>
            <person name="Aoki J."/>
            <person name="Arakawa T."/>
            <person name="Iida J."/>
            <person name="Imamura K."/>
            <person name="Itoh M."/>
            <person name="Kato T."/>
            <person name="Kawaji H."/>
            <person name="Kawagashira N."/>
            <person name="Kawashima T."/>
            <person name="Kojima M."/>
            <person name="Kondo S."/>
            <person name="Konno H."/>
            <person name="Nakano K."/>
            <person name="Ninomiya N."/>
            <person name="Nishio T."/>
            <person name="Okada M."/>
            <person name="Plessy C."/>
            <person name="Shibata K."/>
            <person name="Shiraki T."/>
            <person name="Suzuki S."/>
            <person name="Tagami M."/>
            <person name="Waki K."/>
            <person name="Watahiki A."/>
            <person name="Okamura-Oho Y."/>
            <person name="Suzuki H."/>
            <person name="Kawai J."/>
            <person name="Hayashizaki Y."/>
        </authorList>
    </citation>
    <scope>NUCLEOTIDE SEQUENCE [LARGE SCALE MRNA]</scope>
    <source>
        <strain>C57BL/6J</strain>
        <tissue>Thymus</tissue>
    </source>
</reference>
<reference key="3">
    <citation type="journal article" date="2004" name="Genome Res.">
        <title>The status, quality, and expansion of the NIH full-length cDNA project: the Mammalian Gene Collection (MGC).</title>
        <authorList>
            <consortium name="The MGC Project Team"/>
        </authorList>
    </citation>
    <scope>NUCLEOTIDE SEQUENCE [LARGE SCALE MRNA]</scope>
    <source>
        <strain>Czech II</strain>
        <strain>FVB/N</strain>
        <tissue>Mammary gland</tissue>
    </source>
</reference>
<reference key="4">
    <citation type="journal article" date="2010" name="Cell">
        <title>A tissue-specific atlas of mouse protein phosphorylation and expression.</title>
        <authorList>
            <person name="Huttlin E.L."/>
            <person name="Jedrychowski M.P."/>
            <person name="Elias J.E."/>
            <person name="Goswami T."/>
            <person name="Rad R."/>
            <person name="Beausoleil S.A."/>
            <person name="Villen J."/>
            <person name="Haas W."/>
            <person name="Sowa M.E."/>
            <person name="Gygi S.P."/>
        </authorList>
    </citation>
    <scope>IDENTIFICATION BY MASS SPECTROMETRY [LARGE SCALE ANALYSIS]</scope>
    <source>
        <tissue>Kidney</tissue>
        <tissue>Spleen</tissue>
        <tissue>Testis</tissue>
    </source>
</reference>
<reference key="5">
    <citation type="journal article" date="2015" name="Cell">
        <title>A biogenesis step upstream of microprocessor controls miR-17~92 expression.</title>
        <authorList>
            <person name="Du P."/>
            <person name="Wang L."/>
            <person name="Sliz P."/>
            <person name="Gregory R.I."/>
        </authorList>
    </citation>
    <scope>IDENTIFICATION BY MASS SPECTROMETRY</scope>
    <scope>FUNCTION</scope>
    <scope>INTERACTION WITH CPSF3; DGCR8 AND DROSHA</scope>
    <scope>DEVELOPMENTAL STAGE</scope>
</reference>
<reference key="6">
    <citation type="journal article" date="2018" name="Cell Stem Cell">
        <title>An intermediate pluripotent state controlled by microRNAs is required for the naive-to-primed stem cell transition.</title>
        <authorList>
            <person name="Du P."/>
            <person name="Pirouz M."/>
            <person name="Choi J."/>
            <person name="Huebner A.J."/>
            <person name="Clement K."/>
            <person name="Meissner A."/>
            <person name="Hochedlinger K."/>
            <person name="Gregory R.I."/>
        </authorList>
    </citation>
    <scope>FUNCTION</scope>
    <scope>DEVELOPMENTAL STAGE</scope>
</reference>
<reference key="7">
    <citation type="submission" date="2005-11" db="PDB data bank">
        <title>Solution structure of ISY1 domain in hypothetical protein.</title>
        <authorList>
            <consortium name="RIKEN structural genomics initiative (RSGI)"/>
        </authorList>
    </citation>
    <scope>STRUCTURE BY NMR OF 24-102</scope>
</reference>
<keyword id="KW-0002">3D-structure</keyword>
<keyword id="KW-0007">Acetylation</keyword>
<keyword id="KW-0507">mRNA processing</keyword>
<keyword id="KW-0508">mRNA splicing</keyword>
<keyword id="KW-0539">Nucleus</keyword>
<keyword id="KW-0597">Phosphoprotein</keyword>
<keyword id="KW-1185">Reference proteome</keyword>
<keyword id="KW-0747">Spliceosome</keyword>
<organism>
    <name type="scientific">Mus musculus</name>
    <name type="common">Mouse</name>
    <dbReference type="NCBI Taxonomy" id="10090"/>
    <lineage>
        <taxon>Eukaryota</taxon>
        <taxon>Metazoa</taxon>
        <taxon>Chordata</taxon>
        <taxon>Craniata</taxon>
        <taxon>Vertebrata</taxon>
        <taxon>Euteleostomi</taxon>
        <taxon>Mammalia</taxon>
        <taxon>Eutheria</taxon>
        <taxon>Euarchontoglires</taxon>
        <taxon>Glires</taxon>
        <taxon>Rodentia</taxon>
        <taxon>Myomorpha</taxon>
        <taxon>Muroidea</taxon>
        <taxon>Muridae</taxon>
        <taxon>Murinae</taxon>
        <taxon>Mus</taxon>
        <taxon>Mus</taxon>
    </lineage>
</organism>
<proteinExistence type="evidence at protein level"/>
<comment type="function">
    <text evidence="1 3 4">Component of the spliceosome C complex required for the selective processing of microRNAs (miRNAs) during embryonic stem cell differentiation (PubMed:26255770, PubMed:29804889). Required for the biogenesis of all miRNAs from the pri-miR-17-92 primary transcript except miR-92a (PubMed:26255770). Only required for the biogenesis of miR-290 and miR-96 from the pri-miR-290-295 and pri-miR-96-183 primary transcripts, respectively (PubMed:29804889). Required during the transition of embryonic stem cells (ESCs) from the naive to primed state (PubMed:29804889). By enhancing miRNA biogenesis, promotes exit of ESCs from the naive state to an intermediate state of poised pluripotency, which precedes the transition to the primed state (PubMed:29804889). Involved in pre-mRNA splicing as component of the spliceosome.</text>
</comment>
<comment type="subunit">
    <text evidence="1 3">Identified in the spliceosome C complex. Component of the XAB2 complex, a multimeric protein complex composed of XAB2, PRPF19, AQR, ZNF830, ISY1, and PPIE. Identified in a pentameric intron-binding (IB) complex composed of AQR, XAB2, ISY1, ZNF830 and PPIE that is incorporated into the spliceosome as a preassembled complex. The IB complex does not contain PRPF19. Interacts with CPSF3; this interaction is in an RNA independent manner (PubMed:26255770). Interacts with the microprocessor complex subunits DGCR8 and DROSHA; this interaction is in an RNA dependent manner (PubMed:26255770).</text>
</comment>
<comment type="subcellular location">
    <subcellularLocation>
        <location evidence="1">Nucleus</location>
    </subcellularLocation>
</comment>
<comment type="developmental stage">
    <text evidence="3 4">During embryoid body (EB) formation, expression peaks at day 1 of EB differentiation (at protein level) (PubMed:29804889). Expressed during embryonic stem cell differentiation in vitro, with high expression during the earliest time point of differentiation during a 'poised' pluripotency phase that occurs in between embryonic day 4.5 and embryonic day 5.5 (PubMed:26255770, PubMed:29804889).</text>
</comment>
<comment type="similarity">
    <text evidence="5">Belongs to the ISY1 family.</text>
</comment>
<comment type="sequence caution" evidence="5">
    <conflict type="erroneous initiation">
        <sequence resource="EMBL-CDS" id="BAD32394"/>
    </conflict>
</comment>
<name>ISY1_MOUSE</name>
<sequence>MARNAEKAMTALARFRQAQLEEGKVKERRPFLASECTELPKAEKWRRQIIGEISKKVAQIQNAGLGEFRIRDLNDEINKLLREKGHWEVRIKELGGPDYGKVGPKMLDHEGKEVPGNRGYKYFGAAKDLPGVRELFEKEPLPPPRKTRAELMKAIDFEYYGYLDEDDGVIVPLEQEYEKKLRAELVEKWKAEREARLARGEKEEEEEEEEEINIYAVTEEESDEEGNQEKAGEDGQQKFIAHVPVPSQQEIEEALVRRKKMELLQKYASETLQAQSEEAKRLLGY</sequence>
<dbReference type="EMBL" id="AK173116">
    <property type="protein sequence ID" value="BAD32394.1"/>
    <property type="status" value="ALT_INIT"/>
    <property type="molecule type" value="mRNA"/>
</dbReference>
<dbReference type="EMBL" id="AK017996">
    <property type="protein sequence ID" value="BAB31028.1"/>
    <property type="molecule type" value="mRNA"/>
</dbReference>
<dbReference type="EMBL" id="BC020103">
    <property type="protein sequence ID" value="AAH20103.1"/>
    <property type="molecule type" value="mRNA"/>
</dbReference>
<dbReference type="EMBL" id="BC037695">
    <property type="protein sequence ID" value="AAH37695.1"/>
    <property type="molecule type" value="mRNA"/>
</dbReference>
<dbReference type="CCDS" id="CCDS39548.1"/>
<dbReference type="RefSeq" id="NP_598695.1">
    <property type="nucleotide sequence ID" value="NM_133934.5"/>
</dbReference>
<dbReference type="PDB" id="1X4T">
    <property type="method" value="NMR"/>
    <property type="chains" value="A=24-102"/>
</dbReference>
<dbReference type="PDBsum" id="1X4T"/>
<dbReference type="SMR" id="Q69ZQ2"/>
<dbReference type="BioGRID" id="208359">
    <property type="interactions" value="19"/>
</dbReference>
<dbReference type="FunCoup" id="Q69ZQ2">
    <property type="interactions" value="3090"/>
</dbReference>
<dbReference type="IntAct" id="Q69ZQ2">
    <property type="interactions" value="18"/>
</dbReference>
<dbReference type="STRING" id="10090.ENSMUSP00000086923"/>
<dbReference type="iPTMnet" id="Q69ZQ2"/>
<dbReference type="PhosphoSitePlus" id="Q69ZQ2"/>
<dbReference type="PaxDb" id="10090-ENSMUSP00000086923"/>
<dbReference type="PeptideAtlas" id="Q69ZQ2"/>
<dbReference type="ProteomicsDB" id="269003"/>
<dbReference type="Pumba" id="Q69ZQ2"/>
<dbReference type="DNASU" id="57905"/>
<dbReference type="Ensembl" id="ENSMUST00000089497.7">
    <property type="protein sequence ID" value="ENSMUSP00000086923.5"/>
    <property type="gene ID" value="ENSMUSG00000030056.9"/>
</dbReference>
<dbReference type="GeneID" id="57905"/>
<dbReference type="KEGG" id="mmu:57905"/>
<dbReference type="UCSC" id="uc009cub.1">
    <property type="organism name" value="mouse"/>
</dbReference>
<dbReference type="AGR" id="MGI:1923310"/>
<dbReference type="CTD" id="57461"/>
<dbReference type="MGI" id="MGI:1923310">
    <property type="gene designation" value="Isy1"/>
</dbReference>
<dbReference type="VEuPathDB" id="HostDB:ENSMUSG00000030056"/>
<dbReference type="eggNOG" id="KOG3068">
    <property type="taxonomic scope" value="Eukaryota"/>
</dbReference>
<dbReference type="GeneTree" id="ENSGT00390000014109"/>
<dbReference type="HOGENOM" id="CLU_043453_0_0_1"/>
<dbReference type="InParanoid" id="Q69ZQ2"/>
<dbReference type="OMA" id="QKFTAHV"/>
<dbReference type="OrthoDB" id="1739576at2759"/>
<dbReference type="PhylomeDB" id="Q69ZQ2"/>
<dbReference type="TreeFam" id="TF105841"/>
<dbReference type="Reactome" id="R-MMU-6781823">
    <property type="pathway name" value="Formation of TC-NER Pre-Incision Complex"/>
</dbReference>
<dbReference type="Reactome" id="R-MMU-6782135">
    <property type="pathway name" value="Dual incision in TC-NER"/>
</dbReference>
<dbReference type="Reactome" id="R-MMU-6782210">
    <property type="pathway name" value="Gap-filling DNA repair synthesis and ligation in TC-NER"/>
</dbReference>
<dbReference type="Reactome" id="R-MMU-72163">
    <property type="pathway name" value="mRNA Splicing - Major Pathway"/>
</dbReference>
<dbReference type="BioGRID-ORCS" id="57905">
    <property type="hits" value="22 hits in 75 CRISPR screens"/>
</dbReference>
<dbReference type="ChiTaRS" id="Isy1">
    <property type="organism name" value="mouse"/>
</dbReference>
<dbReference type="EvolutionaryTrace" id="Q69ZQ2"/>
<dbReference type="PRO" id="PR:Q69ZQ2"/>
<dbReference type="Proteomes" id="UP000000589">
    <property type="component" value="Chromosome 6"/>
</dbReference>
<dbReference type="RNAct" id="Q69ZQ2">
    <property type="molecule type" value="protein"/>
</dbReference>
<dbReference type="Bgee" id="ENSMUSG00000030056">
    <property type="expression patterns" value="Expressed in embryonic post-anal tail and 233 other cell types or tissues"/>
</dbReference>
<dbReference type="ExpressionAtlas" id="Q69ZQ2">
    <property type="expression patterns" value="baseline and differential"/>
</dbReference>
<dbReference type="GO" id="GO:0071013">
    <property type="term" value="C:catalytic step 2 spliceosome"/>
    <property type="evidence" value="ECO:0007669"/>
    <property type="project" value="Ensembl"/>
</dbReference>
<dbReference type="GO" id="GO:0005634">
    <property type="term" value="C:nucleus"/>
    <property type="evidence" value="ECO:0000250"/>
    <property type="project" value="UniProtKB"/>
</dbReference>
<dbReference type="GO" id="GO:0071006">
    <property type="term" value="C:U2-type catalytic step 1 spliceosome"/>
    <property type="evidence" value="ECO:0000250"/>
    <property type="project" value="UniProtKB"/>
</dbReference>
<dbReference type="GO" id="GO:0000350">
    <property type="term" value="P:generation of catalytic spliceosome for second transesterification step"/>
    <property type="evidence" value="ECO:0007669"/>
    <property type="project" value="InterPro"/>
</dbReference>
<dbReference type="GO" id="GO:0000398">
    <property type="term" value="P:mRNA splicing, via spliceosome"/>
    <property type="evidence" value="ECO:0000250"/>
    <property type="project" value="UniProtKB"/>
</dbReference>
<dbReference type="FunFam" id="1.10.287.660:FF:000001">
    <property type="entry name" value="pre-mRNA-splicing factor ISY1 homolog"/>
    <property type="match status" value="1"/>
</dbReference>
<dbReference type="Gene3D" id="1.10.287.660">
    <property type="entry name" value="Helix hairpin bin"/>
    <property type="match status" value="1"/>
</dbReference>
<dbReference type="InterPro" id="IPR029012">
    <property type="entry name" value="Helix_hairpin_bin_sf"/>
</dbReference>
<dbReference type="InterPro" id="IPR009360">
    <property type="entry name" value="Isy1"/>
</dbReference>
<dbReference type="InterPro" id="IPR037200">
    <property type="entry name" value="Isy1_sf"/>
</dbReference>
<dbReference type="PANTHER" id="PTHR13021">
    <property type="entry name" value="PRE-MRNA-SPLICING FACTOR ISY1"/>
    <property type="match status" value="1"/>
</dbReference>
<dbReference type="Pfam" id="PF06246">
    <property type="entry name" value="Isy1"/>
    <property type="match status" value="1"/>
</dbReference>
<dbReference type="SUPFAM" id="SSF140102">
    <property type="entry name" value="ISY1 domain-like"/>
    <property type="match status" value="1"/>
</dbReference>
<feature type="chain" id="PRO_0000235814" description="Pre-mRNA-splicing factor ISY1 homolog">
    <location>
        <begin position="1"/>
        <end position="285"/>
    </location>
</feature>
<feature type="region of interest" description="Disordered" evidence="2">
    <location>
        <begin position="197"/>
        <end position="244"/>
    </location>
</feature>
<feature type="compositionally biased region" description="Acidic residues" evidence="2">
    <location>
        <begin position="203"/>
        <end position="226"/>
    </location>
</feature>
<feature type="compositionally biased region" description="Basic and acidic residues" evidence="2">
    <location>
        <begin position="227"/>
        <end position="236"/>
    </location>
</feature>
<feature type="modified residue" description="N6-acetyllysine" evidence="1">
    <location>
        <position position="127"/>
    </location>
</feature>
<feature type="modified residue" description="Phosphoserine" evidence="1">
    <location>
        <position position="247"/>
    </location>
</feature>
<feature type="sequence conflict" description="In Ref. 2; BAB31028." evidence="5" ref="2">
    <original>R</original>
    <variation>K</variation>
    <location>
        <position position="133"/>
    </location>
</feature>
<feature type="turn" evidence="6">
    <location>
        <begin position="33"/>
        <end position="35"/>
    </location>
</feature>
<feature type="helix" evidence="6">
    <location>
        <begin position="39"/>
        <end position="62"/>
    </location>
</feature>
<feature type="helix" evidence="6">
    <location>
        <begin position="67"/>
        <end position="94"/>
    </location>
</feature>
<feature type="turn" evidence="6">
    <location>
        <begin position="100"/>
        <end position="102"/>
    </location>
</feature>
<protein>
    <recommendedName>
        <fullName>Pre-mRNA-splicing factor ISY1 homolog</fullName>
    </recommendedName>
</protein>